<dbReference type="EMBL" id="X06414">
    <property type="protein sequence ID" value="CAA29720.1"/>
    <property type="molecule type" value="Genomic_DNA"/>
</dbReference>
<dbReference type="EMBL" id="CP000123">
    <property type="protein sequence ID" value="ABC01776.1"/>
    <property type="molecule type" value="Genomic_DNA"/>
</dbReference>
<dbReference type="EMBL" id="X01121">
    <property type="protein sequence ID" value="CAA25589.1"/>
    <property type="molecule type" value="Genomic_DNA"/>
</dbReference>
<dbReference type="PIR" id="S02847">
    <property type="entry name" value="R5YM18"/>
</dbReference>
<dbReference type="RefSeq" id="WP_011387535.1">
    <property type="nucleotide sequence ID" value="NC_007633.1"/>
</dbReference>
<dbReference type="SMR" id="P04453"/>
<dbReference type="GeneID" id="23778366"/>
<dbReference type="KEGG" id="mcp:MCAP_0680"/>
<dbReference type="HOGENOM" id="CLU_098841_0_1_14"/>
<dbReference type="PhylomeDB" id="P04453"/>
<dbReference type="Proteomes" id="UP000001928">
    <property type="component" value="Chromosome"/>
</dbReference>
<dbReference type="GO" id="GO:0022625">
    <property type="term" value="C:cytosolic large ribosomal subunit"/>
    <property type="evidence" value="ECO:0007669"/>
    <property type="project" value="TreeGrafter"/>
</dbReference>
<dbReference type="GO" id="GO:0008097">
    <property type="term" value="F:5S rRNA binding"/>
    <property type="evidence" value="ECO:0007669"/>
    <property type="project" value="TreeGrafter"/>
</dbReference>
<dbReference type="GO" id="GO:0003735">
    <property type="term" value="F:structural constituent of ribosome"/>
    <property type="evidence" value="ECO:0007669"/>
    <property type="project" value="InterPro"/>
</dbReference>
<dbReference type="GO" id="GO:0006412">
    <property type="term" value="P:translation"/>
    <property type="evidence" value="ECO:0007669"/>
    <property type="project" value="UniProtKB-UniRule"/>
</dbReference>
<dbReference type="CDD" id="cd00432">
    <property type="entry name" value="Ribosomal_L18_L5e"/>
    <property type="match status" value="1"/>
</dbReference>
<dbReference type="FunFam" id="3.30.420.100:FF:000001">
    <property type="entry name" value="50S ribosomal protein L18"/>
    <property type="match status" value="1"/>
</dbReference>
<dbReference type="Gene3D" id="3.30.420.100">
    <property type="match status" value="1"/>
</dbReference>
<dbReference type="HAMAP" id="MF_01337_B">
    <property type="entry name" value="Ribosomal_uL18_B"/>
    <property type="match status" value="1"/>
</dbReference>
<dbReference type="InterPro" id="IPR004389">
    <property type="entry name" value="Ribosomal_uL18_bac-type"/>
</dbReference>
<dbReference type="InterPro" id="IPR005484">
    <property type="entry name" value="Ribosomal_uL18_bac/euk"/>
</dbReference>
<dbReference type="NCBIfam" id="TIGR00060">
    <property type="entry name" value="L18_bact"/>
    <property type="match status" value="1"/>
</dbReference>
<dbReference type="PANTHER" id="PTHR12899">
    <property type="entry name" value="39S RIBOSOMAL PROTEIN L18, MITOCHONDRIAL"/>
    <property type="match status" value="1"/>
</dbReference>
<dbReference type="PANTHER" id="PTHR12899:SF3">
    <property type="entry name" value="LARGE RIBOSOMAL SUBUNIT PROTEIN UL18M"/>
    <property type="match status" value="1"/>
</dbReference>
<dbReference type="Pfam" id="PF00861">
    <property type="entry name" value="Ribosomal_L18p"/>
    <property type="match status" value="1"/>
</dbReference>
<dbReference type="SUPFAM" id="SSF53137">
    <property type="entry name" value="Translational machinery components"/>
    <property type="match status" value="1"/>
</dbReference>
<comment type="function">
    <text evidence="1">This is one of the proteins that bind and probably mediate the attachment of the 5S RNA into the large ribosomal subunit, where it forms part of the central protuberance.</text>
</comment>
<comment type="subunit">
    <text evidence="1">Part of the 50S ribosomal subunit; part of the 5S rRNA/L5/L18/L25 subcomplex. Contacts the 5S and 23S rRNAs.</text>
</comment>
<comment type="similarity">
    <text evidence="1">Belongs to the universal ribosomal protein uL18 family.</text>
</comment>
<name>RL18_MYCCT</name>
<proteinExistence type="inferred from homology"/>
<reference key="1">
    <citation type="journal article" date="1987" name="Mol. Gen. Genet.">
        <title>The ribosomal protein gene cluster of Mycoplasma capricolum.</title>
        <authorList>
            <person name="Ohkubo S."/>
            <person name="Muto A."/>
            <person name="Kawauchi Y."/>
            <person name="Yamao F."/>
            <person name="Osawa S."/>
        </authorList>
    </citation>
    <scope>NUCLEOTIDE SEQUENCE [GENOMIC DNA]</scope>
</reference>
<reference key="2">
    <citation type="submission" date="2005-09" db="EMBL/GenBank/DDBJ databases">
        <authorList>
            <person name="Glass J.I."/>
            <person name="Lartigue C."/>
            <person name="Pfannkoch C."/>
            <person name="Baden-Tillson H."/>
            <person name="Smith H.O."/>
            <person name="Venter J.C."/>
            <person name="Roske K."/>
            <person name="Wise K.S."/>
            <person name="Calcutt M.J."/>
            <person name="Nelson W.C."/>
            <person name="Nierman W.C."/>
        </authorList>
    </citation>
    <scope>NUCLEOTIDE SEQUENCE [LARGE SCALE GENOMIC DNA]</scope>
    <source>
        <strain>California kid / ATCC 27343 / NCTC 10154</strain>
    </source>
</reference>
<reference key="3">
    <citation type="journal article" date="1984" name="Nucleic Acids Res.">
        <title>Preferential use of A- and U-rich codons for Mycoplasma capricolum ribosomal proteins S8 and L6.</title>
        <authorList>
            <person name="Muto A."/>
            <person name="Kawauchi Y."/>
            <person name="Yamao F."/>
            <person name="Osawa S."/>
        </authorList>
    </citation>
    <scope>NUCLEOTIDE SEQUENCE [GENOMIC DNA] OF 1-81</scope>
</reference>
<gene>
    <name evidence="1" type="primary">rplR</name>
    <name type="ordered locus">MCAP_0680</name>
</gene>
<accession>P04453</accession>
<accession>Q2SRG9</accession>
<keyword id="KW-0687">Ribonucleoprotein</keyword>
<keyword id="KW-0689">Ribosomal protein</keyword>
<keyword id="KW-0694">RNA-binding</keyword>
<keyword id="KW-0699">rRNA-binding</keyword>
<feature type="chain" id="PRO_0000131294" description="Large ribosomal subunit protein uL18">
    <location>
        <begin position="1"/>
        <end position="116"/>
    </location>
</feature>
<organism>
    <name type="scientific">Mycoplasma capricolum subsp. capricolum (strain California kid / ATCC 27343 / NCTC 10154)</name>
    <dbReference type="NCBI Taxonomy" id="340047"/>
    <lineage>
        <taxon>Bacteria</taxon>
        <taxon>Bacillati</taxon>
        <taxon>Mycoplasmatota</taxon>
        <taxon>Mollicutes</taxon>
        <taxon>Mycoplasmataceae</taxon>
        <taxon>Mycoplasma</taxon>
    </lineage>
</organism>
<sequence>MKFTKTEARKRRHFRVRHKVVGTAERPRLNVFKSNTNFYAQIIDDTKGVTLVSASTLKMDLKSKSNIQAAEKVAEELTKKALAANINQVVFDRNGYLYHGKIKAFAQKARENGLKF</sequence>
<protein>
    <recommendedName>
        <fullName evidence="1">Large ribosomal subunit protein uL18</fullName>
    </recommendedName>
    <alternativeName>
        <fullName evidence="2">50S ribosomal protein L18</fullName>
    </alternativeName>
</protein>
<evidence type="ECO:0000255" key="1">
    <source>
        <dbReference type="HAMAP-Rule" id="MF_01337"/>
    </source>
</evidence>
<evidence type="ECO:0000305" key="2"/>